<evidence type="ECO:0000255" key="1">
    <source>
        <dbReference type="HAMAP-Rule" id="MF_00693"/>
    </source>
</evidence>
<reference key="1">
    <citation type="journal article" date="2006" name="DNA Res.">
        <title>Genome sequence of the cat pathogen, Chlamydophila felis.</title>
        <authorList>
            <person name="Azuma Y."/>
            <person name="Hirakawa H."/>
            <person name="Yamashita A."/>
            <person name="Cai Y."/>
            <person name="Rahman M.A."/>
            <person name="Suzuki H."/>
            <person name="Mitaku S."/>
            <person name="Toh H."/>
            <person name="Goto S."/>
            <person name="Murakami T."/>
            <person name="Sugi K."/>
            <person name="Hayashi H."/>
            <person name="Fukushi H."/>
            <person name="Hattori M."/>
            <person name="Kuhara S."/>
            <person name="Shirai M."/>
        </authorList>
    </citation>
    <scope>NUCLEOTIDE SEQUENCE [LARGE SCALE GENOMIC DNA]</scope>
    <source>
        <strain>Fe/C-56</strain>
    </source>
</reference>
<keyword id="KW-0963">Cytoplasm</keyword>
<keyword id="KW-0238">DNA-binding</keyword>
<keyword id="KW-0804">Transcription</keyword>
<keyword id="KW-0805">Transcription regulation</keyword>
<dbReference type="EMBL" id="AP006861">
    <property type="protein sequence ID" value="BAE81610.1"/>
    <property type="molecule type" value="Genomic_DNA"/>
</dbReference>
<dbReference type="RefSeq" id="WP_011458385.1">
    <property type="nucleotide sequence ID" value="NC_007899.1"/>
</dbReference>
<dbReference type="SMR" id="Q253C8"/>
<dbReference type="STRING" id="264202.gene:10544668"/>
<dbReference type="KEGG" id="cfe:BAE81610.1"/>
<dbReference type="eggNOG" id="COG0217">
    <property type="taxonomic scope" value="Bacteria"/>
</dbReference>
<dbReference type="HOGENOM" id="CLU_062974_3_0_0"/>
<dbReference type="OrthoDB" id="9781053at2"/>
<dbReference type="Proteomes" id="UP000001260">
    <property type="component" value="Chromosome"/>
</dbReference>
<dbReference type="GO" id="GO:0005829">
    <property type="term" value="C:cytosol"/>
    <property type="evidence" value="ECO:0007669"/>
    <property type="project" value="TreeGrafter"/>
</dbReference>
<dbReference type="GO" id="GO:0003677">
    <property type="term" value="F:DNA binding"/>
    <property type="evidence" value="ECO:0007669"/>
    <property type="project" value="UniProtKB-UniRule"/>
</dbReference>
<dbReference type="GO" id="GO:0006355">
    <property type="term" value="P:regulation of DNA-templated transcription"/>
    <property type="evidence" value="ECO:0007669"/>
    <property type="project" value="UniProtKB-UniRule"/>
</dbReference>
<dbReference type="FunFam" id="1.10.10.200:FF:000002">
    <property type="entry name" value="Probable transcriptional regulatory protein CLM62_37755"/>
    <property type="match status" value="1"/>
</dbReference>
<dbReference type="Gene3D" id="1.10.10.200">
    <property type="match status" value="1"/>
</dbReference>
<dbReference type="Gene3D" id="3.30.70.980">
    <property type="match status" value="2"/>
</dbReference>
<dbReference type="HAMAP" id="MF_00693">
    <property type="entry name" value="Transcrip_reg_TACO1"/>
    <property type="match status" value="1"/>
</dbReference>
<dbReference type="InterPro" id="IPR017856">
    <property type="entry name" value="Integrase-like_N"/>
</dbReference>
<dbReference type="InterPro" id="IPR048300">
    <property type="entry name" value="TACO1_YebC-like_2nd/3rd_dom"/>
</dbReference>
<dbReference type="InterPro" id="IPR049083">
    <property type="entry name" value="TACO1_YebC_N"/>
</dbReference>
<dbReference type="InterPro" id="IPR002876">
    <property type="entry name" value="Transcrip_reg_TACO1-like"/>
</dbReference>
<dbReference type="InterPro" id="IPR026564">
    <property type="entry name" value="Transcrip_reg_TACO1-like_dom3"/>
</dbReference>
<dbReference type="InterPro" id="IPR029072">
    <property type="entry name" value="YebC-like"/>
</dbReference>
<dbReference type="NCBIfam" id="NF001030">
    <property type="entry name" value="PRK00110.1"/>
    <property type="match status" value="1"/>
</dbReference>
<dbReference type="NCBIfam" id="NF009044">
    <property type="entry name" value="PRK12378.1"/>
    <property type="match status" value="1"/>
</dbReference>
<dbReference type="NCBIfam" id="TIGR01033">
    <property type="entry name" value="YebC/PmpR family DNA-binding transcriptional regulator"/>
    <property type="match status" value="1"/>
</dbReference>
<dbReference type="PANTHER" id="PTHR12532:SF6">
    <property type="entry name" value="TRANSCRIPTIONAL REGULATORY PROTEIN YEBC-RELATED"/>
    <property type="match status" value="1"/>
</dbReference>
<dbReference type="PANTHER" id="PTHR12532">
    <property type="entry name" value="TRANSLATIONAL ACTIVATOR OF CYTOCHROME C OXIDASE 1"/>
    <property type="match status" value="1"/>
</dbReference>
<dbReference type="Pfam" id="PF20772">
    <property type="entry name" value="TACO1_YebC_N"/>
    <property type="match status" value="1"/>
</dbReference>
<dbReference type="Pfam" id="PF01709">
    <property type="entry name" value="Transcrip_reg"/>
    <property type="match status" value="1"/>
</dbReference>
<dbReference type="SUPFAM" id="SSF75625">
    <property type="entry name" value="YebC-like"/>
    <property type="match status" value="1"/>
</dbReference>
<organism>
    <name type="scientific">Chlamydia felis (strain Fe/C-56)</name>
    <name type="common">Chlamydophila felis</name>
    <dbReference type="NCBI Taxonomy" id="264202"/>
    <lineage>
        <taxon>Bacteria</taxon>
        <taxon>Pseudomonadati</taxon>
        <taxon>Chlamydiota</taxon>
        <taxon>Chlamydiia</taxon>
        <taxon>Chlamydiales</taxon>
        <taxon>Chlamydiaceae</taxon>
        <taxon>Chlamydia/Chlamydophila group</taxon>
        <taxon>Chlamydia</taxon>
    </lineage>
</organism>
<feature type="chain" id="PRO_0000257044" description="Probable transcriptional regulatory protein CF0838">
    <location>
        <begin position="1"/>
        <end position="238"/>
    </location>
</feature>
<sequence length="238" mass="26557">MAGHSKWANTKYRKERADHKRGKIFSRTIKELISAVKMGGPDPKTNARLRVIIQKAKDQNIPSENIERNLKKASSADQKNFEDVTYELYGYGGVGIIVEAMTDNKNRTASDMRIAVNKRGGSLVEPGSVLYNFSRKGACYVPKNSIDEAALLSHVIEVGAEDLDNDDEEHFVVLCDPVDLSSVKEQLVALGVTCTEEKLIYVPLRVVDCDEKDGEANLALIEWLEKIDDVDEVYHNMA</sequence>
<proteinExistence type="inferred from homology"/>
<protein>
    <recommendedName>
        <fullName evidence="1">Probable transcriptional regulatory protein CF0838</fullName>
    </recommendedName>
</protein>
<accession>Q253C8</accession>
<name>Y838_CHLFF</name>
<comment type="subcellular location">
    <subcellularLocation>
        <location evidence="1">Cytoplasm</location>
    </subcellularLocation>
</comment>
<comment type="similarity">
    <text evidence="1">Belongs to the TACO1 family.</text>
</comment>
<gene>
    <name type="ordered locus">CF0838</name>
</gene>